<reference key="1">
    <citation type="journal article" date="1995" name="Virology">
        <title>Analysis of the complete nucleotide sequence of African swine fever virus.</title>
        <authorList>
            <person name="Yanez R.J."/>
            <person name="Rodriguez J.M."/>
            <person name="Nogal M.L."/>
            <person name="Yuste L."/>
            <person name="Enriquez C."/>
            <person name="Rodriguez J.F."/>
            <person name="Vinuela E."/>
        </authorList>
    </citation>
    <scope>NUCLEOTIDE SEQUENCE [LARGE SCALE GENOMIC DNA]</scope>
</reference>
<reference key="2">
    <citation type="journal article" date="2001" name="J. Virol.">
        <title>African swine fever virus multigene family 360 and 530 genes are novel macrophage host range determinants.</title>
        <authorList>
            <person name="Zsak L."/>
            <person name="Lu Z."/>
            <person name="Burrage T.G."/>
            <person name="Neilan J.G."/>
            <person name="Kutish G.F."/>
            <person name="Moore D.M."/>
            <person name="Rock D.L."/>
        </authorList>
    </citation>
    <scope>FUNCTION</scope>
</reference>
<reference key="3">
    <citation type="journal article" date="2020" name="J. Virol.">
        <title>The African Swine Fever Virus Transcriptome.</title>
        <authorList>
            <person name="Cackett G."/>
            <person name="Matelska D."/>
            <person name="Sykora M."/>
            <person name="Portugal R."/>
            <person name="Malecki M."/>
            <person name="Baehler J."/>
            <person name="Dixon L."/>
            <person name="Werner F."/>
        </authorList>
    </citation>
    <scope>INDUCTION</scope>
</reference>
<organismHost>
    <name type="scientific">Ornithodoros</name>
    <name type="common">relapsing fever ticks</name>
    <dbReference type="NCBI Taxonomy" id="6937"/>
</organismHost>
<organismHost>
    <name type="scientific">Sus scrofa</name>
    <name type="common">Pig</name>
    <dbReference type="NCBI Taxonomy" id="9823"/>
</organismHost>
<feature type="chain" id="PRO_0000373317" description="Protein MGF 505-2R">
    <location>
        <begin position="1"/>
        <end position="489"/>
    </location>
</feature>
<sequence>MFSLQDLCRKHLFILPDVFGEHVLQRLGLYWRCHGSLQRIGDDHILIRRDLILSTNEALRMAGEEGNNEVVKLLLLWKGNLHYAVIGALQGDQYDLIHKYENQIGDFHFILPLIQDANTFEKCHALERFCGVSCLLKHATKYNMLPILQKYQEELSMRAYLHETLFELACLWQRYDVLKWIEQTMHVYDLKIMFNIAISKRDLTMYSLGYIFLFDRGNTEATLLTQHLEKTAAKGLLHFVLETLKYGGNIDTVLTQAVKYNHRKLLDYFLRQLPRKHIEKLLLLAVQEKASKKTLNLLLSHLNYSVKRIKKLLRYVIEYESTLVIKILLKKRVNLIDAMLEKMVRYFSATKVRTIMDELSISPERVIKMAIQKMRTDIVIHTSYVWEDDLERLTRLKNMVYTIKYEHGKKMLIKVMHGIYKNLLYGEREKVMFHLAKLYVAQNAATQFRDICKDCYKLDVARFKPRFKQLILDCLEIVTKNLAIVSWKS</sequence>
<proteinExistence type="evidence at protein level"/>
<evidence type="ECO:0000269" key="1">
    <source>
    </source>
</evidence>
<evidence type="ECO:0000269" key="2">
    <source>
    </source>
</evidence>
<evidence type="ECO:0000305" key="3"/>
<name>5052R_ASFB7</name>
<comment type="function">
    <text evidence="1">Plays a role in virus cell tropism, and may be required for efficient virus replication in macrophages.</text>
</comment>
<comment type="induction">
    <text evidence="2">Expressed in the late phase of the viral replicative cycle.</text>
</comment>
<comment type="similarity">
    <text evidence="3">Belongs to the asfivirus MGF 505 family.</text>
</comment>
<dbReference type="EMBL" id="U02468">
    <property type="protein sequence ID" value="AAA17785.1"/>
    <property type="molecule type" value="Genomic_DNA"/>
</dbReference>
<dbReference type="EMBL" id="U18466">
    <property type="protein sequence ID" value="AAA65256.1"/>
    <property type="molecule type" value="Genomic_DNA"/>
</dbReference>
<dbReference type="RefSeq" id="NP_042720.1">
    <property type="nucleotide sequence ID" value="NC_001659.2"/>
</dbReference>
<dbReference type="PDB" id="8W6L">
    <property type="method" value="X-ray"/>
    <property type="resolution" value="2.03 A"/>
    <property type="chains" value="C=204-212"/>
</dbReference>
<dbReference type="PDBsum" id="8W6L"/>
<dbReference type="SMR" id="Q89702"/>
<dbReference type="GeneID" id="22220408"/>
<dbReference type="KEGG" id="vg:22220408"/>
<dbReference type="Proteomes" id="UP000000624">
    <property type="component" value="Segment"/>
</dbReference>
<dbReference type="InterPro" id="IPR004858">
    <property type="entry name" value="MGF_505"/>
</dbReference>
<dbReference type="Pfam" id="PF03158">
    <property type="entry name" value="DUF249"/>
    <property type="match status" value="1"/>
</dbReference>
<dbReference type="SUPFAM" id="SSF140860">
    <property type="entry name" value="Pseudo ankyrin repeat-like"/>
    <property type="match status" value="1"/>
</dbReference>
<keyword id="KW-0002">3D-structure</keyword>
<keyword id="KW-0426">Late protein</keyword>
<keyword id="KW-1185">Reference proteome</keyword>
<organism>
    <name type="scientific">African swine fever virus (strain Badajoz 1971 Vero-adapted)</name>
    <name type="common">Ba71V</name>
    <name type="synonym">ASFV</name>
    <dbReference type="NCBI Taxonomy" id="10498"/>
    <lineage>
        <taxon>Viruses</taxon>
        <taxon>Varidnaviria</taxon>
        <taxon>Bamfordvirae</taxon>
        <taxon>Nucleocytoviricota</taxon>
        <taxon>Pokkesviricetes</taxon>
        <taxon>Asfuvirales</taxon>
        <taxon>Asfarviridae</taxon>
        <taxon>Asfivirus</taxon>
        <taxon>African swine fever virus</taxon>
    </lineage>
</organism>
<protein>
    <recommendedName>
        <fullName>Protein MGF 505-2R</fullName>
    </recommendedName>
</protein>
<accession>Q89702</accession>
<gene>
    <name type="ordered locus">BA71V-025</name>
    <name type="ORF">A489R</name>
</gene>